<protein>
    <recommendedName>
        <fullName>Uncharacterized protein Mb2434c</fullName>
    </recommendedName>
</protein>
<accession>P65002</accession>
<accession>A0A1R3Y149</accession>
<accession>P71732</accession>
<accession>X2BKL7</accession>
<comment type="similarity">
    <text evidence="2">To Synechocystis PCC 6803 sll0335 and to M.tuberculosis Rv2567.</text>
</comment>
<evidence type="ECO:0000256" key="1">
    <source>
        <dbReference type="SAM" id="MobiDB-lite"/>
    </source>
</evidence>
<evidence type="ECO:0000305" key="2"/>
<sequence>MRRVSLPNQLNETRRRSPTRGERIFGGYNTSDVYAMAFDEMFDAQGIVRGPYKGIYAELAPSDASELKARADALGRAFIDQGITFSLSGQERPFPLDLVPRVISAPEWTRLERGITQRVKALECYLDDIYGDQEILRDGVIPRRLVTSCEHFHRQAVGIVPPNGVRIHVAGIDLIRDHRGDFRVLEDNLRSPSGVSYVMENRRTMARVFPNLFATHRVRAVDDYASHLLRALRNSAATNEADPTVVVLTPGVYNSAYFEHSLLARQMGVELVEGRDLFCRDNQVYMRTTEGERQVDVIYRRIDDAFLDPLQFRADSVLGVAGLVNAARAGNVVLSSAIGNGVGDDKLVYTYVPTMIEYYLHEKPLLANVETLRCWLDDEREEVLDRIRELVLKPVEGSGGYGIVFGPEASQAELAAVSQKIRDDPRSWIAQPMMELSTVPTRIEGTLAPRYVDLRPFAVNDGNEVWVLPGGLTRVALVEGSRVVNSSQGGGSKDTWVLAPRASAAARELGAAQIVRSLPQPLCDPTVDASGYEPHDQQPQQQQQQQQQAFH</sequence>
<reference key="1">
    <citation type="journal article" date="2003" name="Proc. Natl. Acad. Sci. U.S.A.">
        <title>The complete genome sequence of Mycobacterium bovis.</title>
        <authorList>
            <person name="Garnier T."/>
            <person name="Eiglmeier K."/>
            <person name="Camus J.-C."/>
            <person name="Medina N."/>
            <person name="Mansoor H."/>
            <person name="Pryor M."/>
            <person name="Duthoy S."/>
            <person name="Grondin S."/>
            <person name="Lacroix C."/>
            <person name="Monsempe C."/>
            <person name="Simon S."/>
            <person name="Harris B."/>
            <person name="Atkin R."/>
            <person name="Doggett J."/>
            <person name="Mayes R."/>
            <person name="Keating L."/>
            <person name="Wheeler P.R."/>
            <person name="Parkhill J."/>
            <person name="Barrell B.G."/>
            <person name="Cole S.T."/>
            <person name="Gordon S.V."/>
            <person name="Hewinson R.G."/>
        </authorList>
    </citation>
    <scope>NUCLEOTIDE SEQUENCE [LARGE SCALE GENOMIC DNA]</scope>
    <source>
        <strain>ATCC BAA-935 / AF2122/97</strain>
    </source>
</reference>
<reference key="2">
    <citation type="journal article" date="2017" name="Genome Announc.">
        <title>Updated reference genome sequence and annotation of Mycobacterium bovis AF2122/97.</title>
        <authorList>
            <person name="Malone K.M."/>
            <person name="Farrell D."/>
            <person name="Stuber T.P."/>
            <person name="Schubert O.T."/>
            <person name="Aebersold R."/>
            <person name="Robbe-Austerman S."/>
            <person name="Gordon S.V."/>
        </authorList>
    </citation>
    <scope>NUCLEOTIDE SEQUENCE [LARGE SCALE GENOMIC DNA]</scope>
    <scope>GENOME REANNOTATION</scope>
    <source>
        <strain>ATCC BAA-935 / AF2122/97</strain>
    </source>
</reference>
<keyword id="KW-1185">Reference proteome</keyword>
<organism>
    <name type="scientific">Mycobacterium bovis (strain ATCC BAA-935 / AF2122/97)</name>
    <dbReference type="NCBI Taxonomy" id="233413"/>
    <lineage>
        <taxon>Bacteria</taxon>
        <taxon>Bacillati</taxon>
        <taxon>Actinomycetota</taxon>
        <taxon>Actinomycetes</taxon>
        <taxon>Mycobacteriales</taxon>
        <taxon>Mycobacteriaceae</taxon>
        <taxon>Mycobacterium</taxon>
        <taxon>Mycobacterium tuberculosis complex</taxon>
    </lineage>
</organism>
<gene>
    <name type="ordered locus">BQ2027_MB2434C</name>
</gene>
<proteinExistence type="predicted"/>
<feature type="chain" id="PRO_0000104033" description="Uncharacterized protein Mb2434c">
    <location>
        <begin position="1"/>
        <end position="551"/>
    </location>
</feature>
<feature type="region of interest" description="Disordered" evidence="1">
    <location>
        <begin position="1"/>
        <end position="22"/>
    </location>
</feature>
<feature type="region of interest" description="Disordered" evidence="1">
    <location>
        <begin position="523"/>
        <end position="551"/>
    </location>
</feature>
<feature type="compositionally biased region" description="Polar residues" evidence="1">
    <location>
        <begin position="1"/>
        <end position="11"/>
    </location>
</feature>
<feature type="compositionally biased region" description="Basic and acidic residues" evidence="1">
    <location>
        <begin position="12"/>
        <end position="22"/>
    </location>
</feature>
<feature type="compositionally biased region" description="Low complexity" evidence="1">
    <location>
        <begin position="537"/>
        <end position="551"/>
    </location>
</feature>
<name>Y2434_MYCBO</name>
<dbReference type="EMBL" id="LT708304">
    <property type="protein sequence ID" value="SIU01049.1"/>
    <property type="molecule type" value="Genomic_DNA"/>
</dbReference>
<dbReference type="RefSeq" id="NP_856083.1">
    <property type="nucleotide sequence ID" value="NC_002945.3"/>
</dbReference>
<dbReference type="RefSeq" id="WP_003412363.1">
    <property type="nucleotide sequence ID" value="NC_002945.4"/>
</dbReference>
<dbReference type="SMR" id="P65002"/>
<dbReference type="KEGG" id="mbo:BQ2027_MB2434C"/>
<dbReference type="PATRIC" id="fig|233413.5.peg.2678"/>
<dbReference type="Proteomes" id="UP000001419">
    <property type="component" value="Chromosome"/>
</dbReference>
<dbReference type="Gene3D" id="3.30.1490.270">
    <property type="match status" value="1"/>
</dbReference>
<dbReference type="Gene3D" id="3.40.50.11290">
    <property type="match status" value="1"/>
</dbReference>
<dbReference type="InterPro" id="IPR051680">
    <property type="entry name" value="ATP-dep_Glu-Cys_Ligase-2"/>
</dbReference>
<dbReference type="InterPro" id="IPR007302">
    <property type="entry name" value="CP_ATPgrasp"/>
</dbReference>
<dbReference type="InterPro" id="IPR016450">
    <property type="entry name" value="UCP005522"/>
</dbReference>
<dbReference type="PANTHER" id="PTHR34595">
    <property type="entry name" value="BLR5612 PROTEIN"/>
    <property type="match status" value="1"/>
</dbReference>
<dbReference type="PANTHER" id="PTHR34595:SF7">
    <property type="entry name" value="SLL1039 PROTEIN"/>
    <property type="match status" value="1"/>
</dbReference>
<dbReference type="Pfam" id="PF04174">
    <property type="entry name" value="CP_ATPgrasp_1"/>
    <property type="match status" value="1"/>
</dbReference>
<dbReference type="PIRSF" id="PIRSF005522">
    <property type="entry name" value="UCP005522"/>
    <property type="match status" value="1"/>
</dbReference>
<dbReference type="SUPFAM" id="SSF56059">
    <property type="entry name" value="Glutathione synthetase ATP-binding domain-like"/>
    <property type="match status" value="1"/>
</dbReference>